<keyword id="KW-0997">Cell inner membrane</keyword>
<keyword id="KW-1003">Cell membrane</keyword>
<keyword id="KW-0472">Membrane</keyword>
<keyword id="KW-0520">NAD</keyword>
<keyword id="KW-0874">Quinone</keyword>
<keyword id="KW-1278">Translocase</keyword>
<keyword id="KW-0813">Transport</keyword>
<keyword id="KW-0830">Ubiquinone</keyword>
<comment type="function">
    <text evidence="1">NDH-1 shuttles electrons from NADH, via FMN and iron-sulfur (Fe-S) centers, to quinones in the respiratory chain. The immediate electron acceptor for the enzyme in this species is believed to be ubiquinone. Couples the redox reaction to proton translocation (for every two electrons transferred, four hydrogen ions are translocated across the cytoplasmic membrane), and thus conserves the redox energy in a proton gradient.</text>
</comment>
<comment type="catalytic activity">
    <reaction evidence="1">
        <text>a quinone + NADH + 5 H(+)(in) = a quinol + NAD(+) + 4 H(+)(out)</text>
        <dbReference type="Rhea" id="RHEA:57888"/>
        <dbReference type="ChEBI" id="CHEBI:15378"/>
        <dbReference type="ChEBI" id="CHEBI:24646"/>
        <dbReference type="ChEBI" id="CHEBI:57540"/>
        <dbReference type="ChEBI" id="CHEBI:57945"/>
        <dbReference type="ChEBI" id="CHEBI:132124"/>
    </reaction>
</comment>
<comment type="subunit">
    <text evidence="1">NDH-1 is composed of 14 different subunits. Subunits NuoB, C, D, E, F, and G constitute the peripheral sector of the complex.</text>
</comment>
<comment type="subcellular location">
    <subcellularLocation>
        <location evidence="1">Cell inner membrane</location>
        <topology evidence="1">Peripheral membrane protein</topology>
        <orientation evidence="1">Cytoplasmic side</orientation>
    </subcellularLocation>
</comment>
<comment type="similarity">
    <text evidence="1">Belongs to the complex I 49 kDa subunit family.</text>
</comment>
<gene>
    <name evidence="1" type="primary">nuoD</name>
    <name type="ordered locus">Neut_0925</name>
</gene>
<protein>
    <recommendedName>
        <fullName evidence="1">NADH-quinone oxidoreductase subunit D</fullName>
        <ecNumber evidence="1">7.1.1.-</ecNumber>
    </recommendedName>
    <alternativeName>
        <fullName evidence="1">NADH dehydrogenase I subunit D</fullName>
    </alternativeName>
    <alternativeName>
        <fullName evidence="1">NDH-1 subunit D</fullName>
    </alternativeName>
</protein>
<organism>
    <name type="scientific">Nitrosomonas eutropha (strain DSM 101675 / C91 / Nm57)</name>
    <dbReference type="NCBI Taxonomy" id="335283"/>
    <lineage>
        <taxon>Bacteria</taxon>
        <taxon>Pseudomonadati</taxon>
        <taxon>Pseudomonadota</taxon>
        <taxon>Betaproteobacteria</taxon>
        <taxon>Nitrosomonadales</taxon>
        <taxon>Nitrosomonadaceae</taxon>
        <taxon>Nitrosomonas</taxon>
    </lineage>
</organism>
<proteinExistence type="inferred from homology"/>
<feature type="chain" id="PRO_0000371895" description="NADH-quinone oxidoreductase subunit D">
    <location>
        <begin position="1"/>
        <end position="417"/>
    </location>
</feature>
<name>NUOD_NITEC</name>
<accession>Q0AHJ7</accession>
<reference key="1">
    <citation type="journal article" date="2007" name="Environ. Microbiol.">
        <title>Whole-genome analysis of the ammonia-oxidizing bacterium, Nitrosomonas eutropha C91: implications for niche adaptation.</title>
        <authorList>
            <person name="Stein L.Y."/>
            <person name="Arp D.J."/>
            <person name="Berube P.M."/>
            <person name="Chain P.S."/>
            <person name="Hauser L."/>
            <person name="Jetten M.S."/>
            <person name="Klotz M.G."/>
            <person name="Larimer F.W."/>
            <person name="Norton J.M."/>
            <person name="Op den Camp H.J.M."/>
            <person name="Shin M."/>
            <person name="Wei X."/>
        </authorList>
    </citation>
    <scope>NUCLEOTIDE SEQUENCE [LARGE SCALE GENOMIC DNA]</scope>
    <source>
        <strain>DSM 101675 / C91 / Nm57</strain>
    </source>
</reference>
<sequence length="417" mass="47935">MADIRNYTMNFGPQHPAAHGVLRLVMELDGEVIRRADPHIGLLHRATEKLAENKTYIQSVPYMDRLDYVSMMVNEHAYVMAIEKLLQIDVPIRAQYIRVMFDEITRILNHLLWLGAHALDVGAMTVFLYTFREREDLMDCYEAVSGARLHAAYYRPGGVYRDLPDSMPQYRSSAIHDEKTTTARNENRQGSLLDFIEDFTHRFPGYVDDYETLLTDNRIWKQRLVDIGVVSPDRAKALGFSGPMLRGSGVAWDLRKKQPYEVYDQVDFDIPVGVNGDCYDRYLVRIEEMRQSNYIIKQCIDWMRKNPGPVITSNFKVAPPPRLSMKQNMEEMIHHFKLFTEGMHVPRGEVYAAVEHPKGEFGIYIISDGANMPYRLKIRAPGFAHLAAMDEMARGHMIADLVAIIGTQDIVFGEIDR</sequence>
<dbReference type="EC" id="7.1.1.-" evidence="1"/>
<dbReference type="EMBL" id="CP000450">
    <property type="protein sequence ID" value="ABI59185.1"/>
    <property type="molecule type" value="Genomic_DNA"/>
</dbReference>
<dbReference type="RefSeq" id="WP_011634009.1">
    <property type="nucleotide sequence ID" value="NC_008344.1"/>
</dbReference>
<dbReference type="SMR" id="Q0AHJ7"/>
<dbReference type="STRING" id="335283.Neut_0925"/>
<dbReference type="KEGG" id="net:Neut_0925"/>
<dbReference type="eggNOG" id="COG0649">
    <property type="taxonomic scope" value="Bacteria"/>
</dbReference>
<dbReference type="HOGENOM" id="CLU_015134_1_1_4"/>
<dbReference type="OrthoDB" id="9801496at2"/>
<dbReference type="Proteomes" id="UP000001966">
    <property type="component" value="Chromosome"/>
</dbReference>
<dbReference type="GO" id="GO:0005886">
    <property type="term" value="C:plasma membrane"/>
    <property type="evidence" value="ECO:0007669"/>
    <property type="project" value="UniProtKB-SubCell"/>
</dbReference>
<dbReference type="GO" id="GO:0051287">
    <property type="term" value="F:NAD binding"/>
    <property type="evidence" value="ECO:0007669"/>
    <property type="project" value="InterPro"/>
</dbReference>
<dbReference type="GO" id="GO:0050136">
    <property type="term" value="F:NADH:ubiquinone reductase (non-electrogenic) activity"/>
    <property type="evidence" value="ECO:0007669"/>
    <property type="project" value="UniProtKB-UniRule"/>
</dbReference>
<dbReference type="GO" id="GO:0048038">
    <property type="term" value="F:quinone binding"/>
    <property type="evidence" value="ECO:0007669"/>
    <property type="project" value="UniProtKB-KW"/>
</dbReference>
<dbReference type="FunFam" id="1.10.645.10:FF:000005">
    <property type="entry name" value="NADH-quinone oxidoreductase subunit D"/>
    <property type="match status" value="1"/>
</dbReference>
<dbReference type="Gene3D" id="1.10.645.10">
    <property type="entry name" value="Cytochrome-c3 Hydrogenase, chain B"/>
    <property type="match status" value="1"/>
</dbReference>
<dbReference type="HAMAP" id="MF_01358">
    <property type="entry name" value="NDH1_NuoD"/>
    <property type="match status" value="1"/>
</dbReference>
<dbReference type="InterPro" id="IPR001135">
    <property type="entry name" value="NADH_Q_OxRdtase_suD"/>
</dbReference>
<dbReference type="InterPro" id="IPR014029">
    <property type="entry name" value="NADH_UbQ_OxRdtase_49kDa_CS"/>
</dbReference>
<dbReference type="InterPro" id="IPR022885">
    <property type="entry name" value="NDH1_su_D/H"/>
</dbReference>
<dbReference type="InterPro" id="IPR029014">
    <property type="entry name" value="NiFe-Hase_large"/>
</dbReference>
<dbReference type="NCBIfam" id="TIGR01962">
    <property type="entry name" value="NuoD"/>
    <property type="match status" value="1"/>
</dbReference>
<dbReference type="NCBIfam" id="NF004739">
    <property type="entry name" value="PRK06075.1"/>
    <property type="match status" value="1"/>
</dbReference>
<dbReference type="PANTHER" id="PTHR11993:SF10">
    <property type="entry name" value="NADH DEHYDROGENASE [UBIQUINONE] IRON-SULFUR PROTEIN 2, MITOCHONDRIAL"/>
    <property type="match status" value="1"/>
</dbReference>
<dbReference type="PANTHER" id="PTHR11993">
    <property type="entry name" value="NADH-UBIQUINONE OXIDOREDUCTASE 49 KDA SUBUNIT"/>
    <property type="match status" value="1"/>
</dbReference>
<dbReference type="Pfam" id="PF00346">
    <property type="entry name" value="Complex1_49kDa"/>
    <property type="match status" value="1"/>
</dbReference>
<dbReference type="SUPFAM" id="SSF56762">
    <property type="entry name" value="HydB/Nqo4-like"/>
    <property type="match status" value="1"/>
</dbReference>
<dbReference type="PROSITE" id="PS00535">
    <property type="entry name" value="COMPLEX1_49K"/>
    <property type="match status" value="1"/>
</dbReference>
<evidence type="ECO:0000255" key="1">
    <source>
        <dbReference type="HAMAP-Rule" id="MF_01358"/>
    </source>
</evidence>